<proteinExistence type="inferred from homology"/>
<reference key="1">
    <citation type="submission" date="2006-12" db="EMBL/GenBank/DDBJ databases">
        <title>Complete sequence of chromosome 1 of Acidovorax sp. JS42.</title>
        <authorList>
            <person name="Copeland A."/>
            <person name="Lucas S."/>
            <person name="Lapidus A."/>
            <person name="Barry K."/>
            <person name="Detter J.C."/>
            <person name="Glavina del Rio T."/>
            <person name="Dalin E."/>
            <person name="Tice H."/>
            <person name="Pitluck S."/>
            <person name="Chertkov O."/>
            <person name="Brettin T."/>
            <person name="Bruce D."/>
            <person name="Han C."/>
            <person name="Tapia R."/>
            <person name="Gilna P."/>
            <person name="Schmutz J."/>
            <person name="Larimer F."/>
            <person name="Land M."/>
            <person name="Hauser L."/>
            <person name="Kyrpides N."/>
            <person name="Kim E."/>
            <person name="Stahl D."/>
            <person name="Richardson P."/>
        </authorList>
    </citation>
    <scope>NUCLEOTIDE SEQUENCE [LARGE SCALE GENOMIC DNA]</scope>
    <source>
        <strain>JS42</strain>
    </source>
</reference>
<accession>A1WC16</accession>
<gene>
    <name evidence="1" type="primary">hslU</name>
    <name type="ordered locus">Ajs_3680</name>
</gene>
<feature type="chain" id="PRO_1000012694" description="ATP-dependent protease ATPase subunit HslU">
    <location>
        <begin position="1"/>
        <end position="446"/>
    </location>
</feature>
<feature type="binding site" evidence="1">
    <location>
        <position position="18"/>
    </location>
    <ligand>
        <name>ATP</name>
        <dbReference type="ChEBI" id="CHEBI:30616"/>
    </ligand>
</feature>
<feature type="binding site" evidence="1">
    <location>
        <begin position="60"/>
        <end position="65"/>
    </location>
    <ligand>
        <name>ATP</name>
        <dbReference type="ChEBI" id="CHEBI:30616"/>
    </ligand>
</feature>
<feature type="binding site" evidence="1">
    <location>
        <position position="259"/>
    </location>
    <ligand>
        <name>ATP</name>
        <dbReference type="ChEBI" id="CHEBI:30616"/>
    </ligand>
</feature>
<feature type="binding site" evidence="1">
    <location>
        <position position="324"/>
    </location>
    <ligand>
        <name>ATP</name>
        <dbReference type="ChEBI" id="CHEBI:30616"/>
    </ligand>
</feature>
<feature type="binding site" evidence="1">
    <location>
        <position position="396"/>
    </location>
    <ligand>
        <name>ATP</name>
        <dbReference type="ChEBI" id="CHEBI:30616"/>
    </ligand>
</feature>
<name>HSLU_ACISJ</name>
<dbReference type="EMBL" id="CP000539">
    <property type="protein sequence ID" value="ABM43791.1"/>
    <property type="molecule type" value="Genomic_DNA"/>
</dbReference>
<dbReference type="SMR" id="A1WC16"/>
<dbReference type="STRING" id="232721.Ajs_3680"/>
<dbReference type="KEGG" id="ajs:Ajs_3680"/>
<dbReference type="eggNOG" id="COG1220">
    <property type="taxonomic scope" value="Bacteria"/>
</dbReference>
<dbReference type="HOGENOM" id="CLU_033123_0_0_4"/>
<dbReference type="Proteomes" id="UP000000645">
    <property type="component" value="Chromosome"/>
</dbReference>
<dbReference type="GO" id="GO:0009376">
    <property type="term" value="C:HslUV protease complex"/>
    <property type="evidence" value="ECO:0007669"/>
    <property type="project" value="UniProtKB-UniRule"/>
</dbReference>
<dbReference type="GO" id="GO:0005524">
    <property type="term" value="F:ATP binding"/>
    <property type="evidence" value="ECO:0007669"/>
    <property type="project" value="UniProtKB-UniRule"/>
</dbReference>
<dbReference type="GO" id="GO:0016887">
    <property type="term" value="F:ATP hydrolysis activity"/>
    <property type="evidence" value="ECO:0007669"/>
    <property type="project" value="InterPro"/>
</dbReference>
<dbReference type="GO" id="GO:0008233">
    <property type="term" value="F:peptidase activity"/>
    <property type="evidence" value="ECO:0007669"/>
    <property type="project" value="InterPro"/>
</dbReference>
<dbReference type="GO" id="GO:0036402">
    <property type="term" value="F:proteasome-activating activity"/>
    <property type="evidence" value="ECO:0007669"/>
    <property type="project" value="UniProtKB-UniRule"/>
</dbReference>
<dbReference type="GO" id="GO:0043335">
    <property type="term" value="P:protein unfolding"/>
    <property type="evidence" value="ECO:0007669"/>
    <property type="project" value="UniProtKB-UniRule"/>
</dbReference>
<dbReference type="GO" id="GO:0051603">
    <property type="term" value="P:proteolysis involved in protein catabolic process"/>
    <property type="evidence" value="ECO:0007669"/>
    <property type="project" value="TreeGrafter"/>
</dbReference>
<dbReference type="CDD" id="cd19498">
    <property type="entry name" value="RecA-like_HslU"/>
    <property type="match status" value="1"/>
</dbReference>
<dbReference type="FunFam" id="1.10.8.10:FF:000028">
    <property type="entry name" value="ATP-dependent protease ATPase subunit HslU"/>
    <property type="match status" value="1"/>
</dbReference>
<dbReference type="FunFam" id="3.40.50.300:FF:000213">
    <property type="entry name" value="ATP-dependent protease ATPase subunit HslU"/>
    <property type="match status" value="1"/>
</dbReference>
<dbReference type="FunFam" id="3.40.50.300:FF:000220">
    <property type="entry name" value="ATP-dependent protease ATPase subunit HslU"/>
    <property type="match status" value="1"/>
</dbReference>
<dbReference type="Gene3D" id="1.10.8.60">
    <property type="match status" value="1"/>
</dbReference>
<dbReference type="Gene3D" id="1.10.8.10">
    <property type="entry name" value="DNA helicase RuvA subunit, C-terminal domain"/>
    <property type="match status" value="1"/>
</dbReference>
<dbReference type="Gene3D" id="3.40.50.300">
    <property type="entry name" value="P-loop containing nucleotide triphosphate hydrolases"/>
    <property type="match status" value="2"/>
</dbReference>
<dbReference type="HAMAP" id="MF_00249">
    <property type="entry name" value="HslU"/>
    <property type="match status" value="1"/>
</dbReference>
<dbReference type="InterPro" id="IPR003593">
    <property type="entry name" value="AAA+_ATPase"/>
</dbReference>
<dbReference type="InterPro" id="IPR050052">
    <property type="entry name" value="ATP-dep_Clp_protease_ClpX"/>
</dbReference>
<dbReference type="InterPro" id="IPR003959">
    <property type="entry name" value="ATPase_AAA_core"/>
</dbReference>
<dbReference type="InterPro" id="IPR019489">
    <property type="entry name" value="Clp_ATPase_C"/>
</dbReference>
<dbReference type="InterPro" id="IPR004491">
    <property type="entry name" value="HslU"/>
</dbReference>
<dbReference type="InterPro" id="IPR027417">
    <property type="entry name" value="P-loop_NTPase"/>
</dbReference>
<dbReference type="NCBIfam" id="TIGR00390">
    <property type="entry name" value="hslU"/>
    <property type="match status" value="1"/>
</dbReference>
<dbReference type="NCBIfam" id="NF003544">
    <property type="entry name" value="PRK05201.1"/>
    <property type="match status" value="1"/>
</dbReference>
<dbReference type="PANTHER" id="PTHR48102">
    <property type="entry name" value="ATP-DEPENDENT CLP PROTEASE ATP-BINDING SUBUNIT CLPX-LIKE, MITOCHONDRIAL-RELATED"/>
    <property type="match status" value="1"/>
</dbReference>
<dbReference type="PANTHER" id="PTHR48102:SF3">
    <property type="entry name" value="ATP-DEPENDENT PROTEASE ATPASE SUBUNIT HSLU"/>
    <property type="match status" value="1"/>
</dbReference>
<dbReference type="Pfam" id="PF00004">
    <property type="entry name" value="AAA"/>
    <property type="match status" value="1"/>
</dbReference>
<dbReference type="Pfam" id="PF07724">
    <property type="entry name" value="AAA_2"/>
    <property type="match status" value="1"/>
</dbReference>
<dbReference type="SMART" id="SM00382">
    <property type="entry name" value="AAA"/>
    <property type="match status" value="1"/>
</dbReference>
<dbReference type="SMART" id="SM01086">
    <property type="entry name" value="ClpB_D2-small"/>
    <property type="match status" value="1"/>
</dbReference>
<dbReference type="SUPFAM" id="SSF52540">
    <property type="entry name" value="P-loop containing nucleoside triphosphate hydrolases"/>
    <property type="match status" value="1"/>
</dbReference>
<comment type="function">
    <text evidence="1">ATPase subunit of a proteasome-like degradation complex; this subunit has chaperone activity. The binding of ATP and its subsequent hydrolysis by HslU are essential for unfolding of protein substrates subsequently hydrolyzed by HslV. HslU recognizes the N-terminal part of its protein substrates and unfolds these before they are guided to HslV for hydrolysis.</text>
</comment>
<comment type="subunit">
    <text evidence="1">A double ring-shaped homohexamer of HslV is capped on each side by a ring-shaped HslU homohexamer. The assembly of the HslU/HslV complex is dependent on binding of ATP.</text>
</comment>
<comment type="subcellular location">
    <subcellularLocation>
        <location evidence="1">Cytoplasm</location>
    </subcellularLocation>
</comment>
<comment type="similarity">
    <text evidence="1">Belongs to the ClpX chaperone family. HslU subfamily.</text>
</comment>
<organism>
    <name type="scientific">Acidovorax sp. (strain JS42)</name>
    <dbReference type="NCBI Taxonomy" id="232721"/>
    <lineage>
        <taxon>Bacteria</taxon>
        <taxon>Pseudomonadati</taxon>
        <taxon>Pseudomonadota</taxon>
        <taxon>Betaproteobacteria</taxon>
        <taxon>Burkholderiales</taxon>
        <taxon>Comamonadaceae</taxon>
        <taxon>Acidovorax</taxon>
    </lineage>
</organism>
<evidence type="ECO:0000255" key="1">
    <source>
        <dbReference type="HAMAP-Rule" id="MF_00249"/>
    </source>
</evidence>
<sequence length="446" mass="49582">MSSMTPQEIVSELDRHIVGQNGAKRAVAIALRNRWRRQQVDASLRHEITPKNILMIGPTGVGKTEIARRLARLADAPFIKVEATKFTEVGYVGKDVDSIVRDLVEVAVKQTREADMKKVRVRAEDAAEDRILDVLIPPARGAGVDTARTGEPAGDSTARQVFRKKLREGQLDDKEIEIDLADARPQFEIMSPAGMEEMTEQLRGMFSQMGQERRRARKLKIAEAMKLLVEEEAAKLVNEEEVKTRALANAEQNGIVFIDEIDKVASRQEAGGADVSRQGVQRDLLPLVEGTTVSTKYGMVKTDHILFIASGAFHLAKPSDLIPELQGRFPIRVELTSLSVQDFEAILTQTHASLVKQYQALLETEGVTLDFTPEGITRLAHIAFEVNERTENIGARRLSTVMERLLDEVSYDATRLSGQTVVVDAGYVNARLQSLSQDEDLSRYIL</sequence>
<protein>
    <recommendedName>
        <fullName evidence="1">ATP-dependent protease ATPase subunit HslU</fullName>
    </recommendedName>
    <alternativeName>
        <fullName evidence="1">Unfoldase HslU</fullName>
    </alternativeName>
</protein>
<keyword id="KW-0067">ATP-binding</keyword>
<keyword id="KW-0143">Chaperone</keyword>
<keyword id="KW-0963">Cytoplasm</keyword>
<keyword id="KW-0547">Nucleotide-binding</keyword>
<keyword id="KW-0346">Stress response</keyword>